<geneLocation type="apicoplast"/>
<protein>
    <recommendedName>
        <fullName evidence="2">Large ribosomal subunit protein uL14c</fullName>
    </recommendedName>
    <alternativeName>
        <fullName>50S ribosomal protein L14, apicoplast</fullName>
    </alternativeName>
</protein>
<dbReference type="EMBL" id="AY217738">
    <property type="protein sequence ID" value="AAO40229.1"/>
    <property type="molecule type" value="Genomic_DNA"/>
</dbReference>
<dbReference type="RefSeq" id="NP_852628.1">
    <property type="nucleotide sequence ID" value="NC_004823.1"/>
</dbReference>
<dbReference type="SMR" id="Q7YN74"/>
<dbReference type="GeneID" id="1263684"/>
<dbReference type="VEuPathDB" id="ToxoDB:ETH2_API02800"/>
<dbReference type="GO" id="GO:0020011">
    <property type="term" value="C:apicoplast"/>
    <property type="evidence" value="ECO:0007669"/>
    <property type="project" value="UniProtKB-SubCell"/>
</dbReference>
<dbReference type="GO" id="GO:0005762">
    <property type="term" value="C:mitochondrial large ribosomal subunit"/>
    <property type="evidence" value="ECO:0007669"/>
    <property type="project" value="TreeGrafter"/>
</dbReference>
<dbReference type="GO" id="GO:0070180">
    <property type="term" value="F:large ribosomal subunit rRNA binding"/>
    <property type="evidence" value="ECO:0007669"/>
    <property type="project" value="TreeGrafter"/>
</dbReference>
<dbReference type="GO" id="GO:0003735">
    <property type="term" value="F:structural constituent of ribosome"/>
    <property type="evidence" value="ECO:0007669"/>
    <property type="project" value="InterPro"/>
</dbReference>
<dbReference type="GO" id="GO:0006412">
    <property type="term" value="P:translation"/>
    <property type="evidence" value="ECO:0007669"/>
    <property type="project" value="InterPro"/>
</dbReference>
<dbReference type="CDD" id="cd00337">
    <property type="entry name" value="Ribosomal_uL14"/>
    <property type="match status" value="1"/>
</dbReference>
<dbReference type="Gene3D" id="2.40.150.20">
    <property type="entry name" value="Ribosomal protein L14"/>
    <property type="match status" value="1"/>
</dbReference>
<dbReference type="HAMAP" id="MF_01367">
    <property type="entry name" value="Ribosomal_uL14"/>
    <property type="match status" value="1"/>
</dbReference>
<dbReference type="InterPro" id="IPR000218">
    <property type="entry name" value="Ribosomal_uL14"/>
</dbReference>
<dbReference type="InterPro" id="IPR036853">
    <property type="entry name" value="Ribosomal_uL14_sf"/>
</dbReference>
<dbReference type="PANTHER" id="PTHR11761">
    <property type="entry name" value="50S/60S RIBOSOMAL PROTEIN L14/L23"/>
    <property type="match status" value="1"/>
</dbReference>
<dbReference type="PANTHER" id="PTHR11761:SF3">
    <property type="entry name" value="LARGE RIBOSOMAL SUBUNIT PROTEIN UL14M"/>
    <property type="match status" value="1"/>
</dbReference>
<dbReference type="Pfam" id="PF00238">
    <property type="entry name" value="Ribosomal_L14"/>
    <property type="match status" value="1"/>
</dbReference>
<dbReference type="SMART" id="SM01374">
    <property type="entry name" value="Ribosomal_L14"/>
    <property type="match status" value="1"/>
</dbReference>
<dbReference type="SUPFAM" id="SSF50193">
    <property type="entry name" value="Ribosomal protein L14"/>
    <property type="match status" value="1"/>
</dbReference>
<gene>
    <name type="primary">rpl14</name>
</gene>
<comment type="function">
    <text evidence="1">Binds to 23S rRNA.</text>
</comment>
<comment type="subunit">
    <text evidence="1">Part of the 50S ribosomal subunit.</text>
</comment>
<comment type="subcellular location">
    <subcellularLocation>
        <location>Plastid</location>
        <location>Apicoplast</location>
    </subcellularLocation>
</comment>
<comment type="similarity">
    <text evidence="2">Belongs to the universal ribosomal protein uL14 family.</text>
</comment>
<evidence type="ECO:0000250" key="1"/>
<evidence type="ECO:0000305" key="2"/>
<keyword id="KW-0933">Apicoplast</keyword>
<keyword id="KW-0934">Plastid</keyword>
<keyword id="KW-0687">Ribonucleoprotein</keyword>
<keyword id="KW-0689">Ribosomal protein</keyword>
<keyword id="KW-0694">RNA-binding</keyword>
<keyword id="KW-0699">rRNA-binding</keyword>
<sequence>MTQINTYFNIADNSGVKKILCIQNLTKKTKKIEIGDLIVGVIKKINNTSKLIYSNIVYGIVIRLKKNINLYKKYNISFNDNSAVLVDKNLNPIGSRIFGTIPKFLKKKNYLKLYSLTVDFI</sequence>
<feature type="chain" id="PRO_0000355905" description="Large ribosomal subunit protein uL14c">
    <location>
        <begin position="1"/>
        <end position="121"/>
    </location>
</feature>
<reference key="1">
    <citation type="journal article" date="2003" name="Gene">
        <title>Apicoplast genome of the coccidian Eimeria tenella.</title>
        <authorList>
            <person name="Cai X."/>
            <person name="Fuller A.L."/>
            <person name="McDougald L.R."/>
            <person name="Zhu G."/>
        </authorList>
    </citation>
    <scope>NUCLEOTIDE SEQUENCE [LARGE SCALE GENOMIC DNA]</scope>
    <source>
        <strain>Penn State</strain>
    </source>
</reference>
<name>RK14_EIMTE</name>
<accession>Q7YN74</accession>
<proteinExistence type="inferred from homology"/>
<organism>
    <name type="scientific">Eimeria tenella</name>
    <name type="common">Coccidian parasite</name>
    <dbReference type="NCBI Taxonomy" id="5802"/>
    <lineage>
        <taxon>Eukaryota</taxon>
        <taxon>Sar</taxon>
        <taxon>Alveolata</taxon>
        <taxon>Apicomplexa</taxon>
        <taxon>Conoidasida</taxon>
        <taxon>Coccidia</taxon>
        <taxon>Eucoccidiorida</taxon>
        <taxon>Eimeriorina</taxon>
        <taxon>Eimeriidae</taxon>
        <taxon>Eimeria</taxon>
    </lineage>
</organism>